<sequence length="760" mass="81986">MNRKNVTRTITAIAVVVLLGWSFFYFSDDTRGYKPVDTSVAITQINGDNVKSAQIDDREQQLRLILKKGNNETDGSEKVITKYPTGYAVDLFNALSAKNAKVSTVVNQGSILGELLVYVLPLLLLVGLFVMFSRMQGGARMGFGFGKSRAKQLSKDMPKTTFADVAGVDEAVEELYEIKDFLQNPSRYQALGAKIPKGVLLYGPPGTGKTLLARAVAGEAGVPFFTISGSDFVEMFVGVGASRVRDLFEQAKQNSPCIIFVDEIDAVGRQRGAGLGGGHDEREQTLNQLLVEMDGFGDRAGVILIAATNRPDILDPALLRPGRFDRQIPVSNPDLAGRRAVLRVHSKGKPMAADADLDGLAKRTVGMTGADLANVINEAALLTARENGTVITGPALEEAVDRVIGGPRRKGRIISEQEKKITAYHEGGHTLAAWAMPDIEPIYKVTILARGRTGGHAVAVPEEDKGLRTRSEMIAQLVFAMGGRAAEELVFREPTTGAVSDIEQATKIARSMVTEFGMSSKLGAVKYGSEHGDPFLGRTMGTQPDYSHEVAREIDEEVRKLIEAAHTEAWEILTEYRDVLDTLAGELLEKETLHRPELESIFADVEKRPRLTMFDDFGGRIPSDKPPIKTPGELAIERGEPWPQPVPEPAFKAAIAQATQAAEAARSDAGQTGHGANGSPAGTHRSGDRQYGSTQPDYGAPAGWHAPGWPPRSSHRPSYSGEPAPTYPGQPYPTGQADPGSDESSAEQDDEVSRTKPAHG</sequence>
<proteinExistence type="evidence at protein level"/>
<name>FTSH_MYCTU</name>
<accession>P9WQN3</accession>
<accession>L0TD18</accession>
<accession>P0A4V8</accession>
<accession>P0C5C0</accession>
<accession>P96942</accession>
<protein>
    <recommendedName>
        <fullName evidence="1">ATP-dependent zinc metalloprotease FtsH</fullName>
        <ecNumber evidence="1">3.4.24.-</ecNumber>
    </recommendedName>
</protein>
<evidence type="ECO:0000255" key="1">
    <source>
        <dbReference type="HAMAP-Rule" id="MF_01458"/>
    </source>
</evidence>
<evidence type="ECO:0000256" key="2">
    <source>
        <dbReference type="SAM" id="MobiDB-lite"/>
    </source>
</evidence>
<evidence type="ECO:0000305" key="3">
    <source>
    </source>
</evidence>
<dbReference type="EC" id="3.4.24.-" evidence="1"/>
<dbReference type="EMBL" id="AL123456">
    <property type="protein sequence ID" value="CCP46433.1"/>
    <property type="molecule type" value="Genomic_DNA"/>
</dbReference>
<dbReference type="PIR" id="C70956">
    <property type="entry name" value="C70956"/>
</dbReference>
<dbReference type="RefSeq" id="NP_218127.1">
    <property type="nucleotide sequence ID" value="NC_000962.3"/>
</dbReference>
<dbReference type="RefSeq" id="WP_003419543.1">
    <property type="nucleotide sequence ID" value="NZ_NVQJ01000056.1"/>
</dbReference>
<dbReference type="SMR" id="P9WQN3"/>
<dbReference type="FunCoup" id="P9WQN3">
    <property type="interactions" value="453"/>
</dbReference>
<dbReference type="STRING" id="83332.Rv3610c"/>
<dbReference type="MEROPS" id="M41.015"/>
<dbReference type="PaxDb" id="83332-Rv3610c"/>
<dbReference type="DNASU" id="885732"/>
<dbReference type="GeneID" id="885732"/>
<dbReference type="KEGG" id="mtu:Rv3610c"/>
<dbReference type="KEGG" id="mtv:RVBD_3610c"/>
<dbReference type="TubercuList" id="Rv3610c"/>
<dbReference type="eggNOG" id="COG0465">
    <property type="taxonomic scope" value="Bacteria"/>
</dbReference>
<dbReference type="InParanoid" id="P9WQN3"/>
<dbReference type="OrthoDB" id="9809379at2"/>
<dbReference type="PhylomeDB" id="P9WQN3"/>
<dbReference type="Proteomes" id="UP000001584">
    <property type="component" value="Chromosome"/>
</dbReference>
<dbReference type="GO" id="GO:0005829">
    <property type="term" value="C:cytosol"/>
    <property type="evidence" value="ECO:0007005"/>
    <property type="project" value="MTBBASE"/>
</dbReference>
<dbReference type="GO" id="GO:0005886">
    <property type="term" value="C:plasma membrane"/>
    <property type="evidence" value="ECO:0000314"/>
    <property type="project" value="MTBBASE"/>
</dbReference>
<dbReference type="GO" id="GO:0005524">
    <property type="term" value="F:ATP binding"/>
    <property type="evidence" value="ECO:0007669"/>
    <property type="project" value="UniProtKB-UniRule"/>
</dbReference>
<dbReference type="GO" id="GO:0016887">
    <property type="term" value="F:ATP hydrolysis activity"/>
    <property type="evidence" value="ECO:0007669"/>
    <property type="project" value="UniProtKB-UniRule"/>
</dbReference>
<dbReference type="GO" id="GO:0004176">
    <property type="term" value="F:ATP-dependent peptidase activity"/>
    <property type="evidence" value="ECO:0000318"/>
    <property type="project" value="GO_Central"/>
</dbReference>
<dbReference type="GO" id="GO:0004222">
    <property type="term" value="F:metalloendopeptidase activity"/>
    <property type="evidence" value="ECO:0007669"/>
    <property type="project" value="InterPro"/>
</dbReference>
<dbReference type="GO" id="GO:0008270">
    <property type="term" value="F:zinc ion binding"/>
    <property type="evidence" value="ECO:0007669"/>
    <property type="project" value="UniProtKB-UniRule"/>
</dbReference>
<dbReference type="GO" id="GO:0030163">
    <property type="term" value="P:protein catabolic process"/>
    <property type="evidence" value="ECO:0000315"/>
    <property type="project" value="MTBBASE"/>
</dbReference>
<dbReference type="GO" id="GO:0006508">
    <property type="term" value="P:proteolysis"/>
    <property type="evidence" value="ECO:0000314"/>
    <property type="project" value="UniProtKB"/>
</dbReference>
<dbReference type="GO" id="GO:0010468">
    <property type="term" value="P:regulation of gene expression"/>
    <property type="evidence" value="ECO:0000314"/>
    <property type="project" value="MTBBASE"/>
</dbReference>
<dbReference type="GO" id="GO:0006979">
    <property type="term" value="P:response to oxidative stress"/>
    <property type="evidence" value="ECO:0000314"/>
    <property type="project" value="MTBBASE"/>
</dbReference>
<dbReference type="CDD" id="cd19501">
    <property type="entry name" value="RecA-like_FtsH"/>
    <property type="match status" value="1"/>
</dbReference>
<dbReference type="FunFam" id="1.10.8.60:FF:000001">
    <property type="entry name" value="ATP-dependent zinc metalloprotease FtsH"/>
    <property type="match status" value="1"/>
</dbReference>
<dbReference type="FunFam" id="1.20.58.760:FF:000002">
    <property type="entry name" value="ATP-dependent zinc metalloprotease FtsH"/>
    <property type="match status" value="1"/>
</dbReference>
<dbReference type="FunFam" id="3.40.50.300:FF:000001">
    <property type="entry name" value="ATP-dependent zinc metalloprotease FtsH"/>
    <property type="match status" value="1"/>
</dbReference>
<dbReference type="Gene3D" id="1.10.8.60">
    <property type="match status" value="1"/>
</dbReference>
<dbReference type="Gene3D" id="3.40.50.300">
    <property type="entry name" value="P-loop containing nucleotide triphosphate hydrolases"/>
    <property type="match status" value="1"/>
</dbReference>
<dbReference type="Gene3D" id="1.20.58.760">
    <property type="entry name" value="Peptidase M41"/>
    <property type="match status" value="1"/>
</dbReference>
<dbReference type="HAMAP" id="MF_01458">
    <property type="entry name" value="FtsH"/>
    <property type="match status" value="1"/>
</dbReference>
<dbReference type="InterPro" id="IPR003593">
    <property type="entry name" value="AAA+_ATPase"/>
</dbReference>
<dbReference type="InterPro" id="IPR041569">
    <property type="entry name" value="AAA_lid_3"/>
</dbReference>
<dbReference type="InterPro" id="IPR003959">
    <property type="entry name" value="ATPase_AAA_core"/>
</dbReference>
<dbReference type="InterPro" id="IPR003960">
    <property type="entry name" value="ATPase_AAA_CS"/>
</dbReference>
<dbReference type="InterPro" id="IPR005936">
    <property type="entry name" value="FtsH"/>
</dbReference>
<dbReference type="InterPro" id="IPR027417">
    <property type="entry name" value="P-loop_NTPase"/>
</dbReference>
<dbReference type="InterPro" id="IPR011546">
    <property type="entry name" value="Pept_M41_FtsH_extracell"/>
</dbReference>
<dbReference type="InterPro" id="IPR000642">
    <property type="entry name" value="Peptidase_M41"/>
</dbReference>
<dbReference type="InterPro" id="IPR037219">
    <property type="entry name" value="Peptidase_M41-like"/>
</dbReference>
<dbReference type="NCBIfam" id="TIGR01241">
    <property type="entry name" value="FtsH_fam"/>
    <property type="match status" value="1"/>
</dbReference>
<dbReference type="PANTHER" id="PTHR23076:SF97">
    <property type="entry name" value="ATP-DEPENDENT ZINC METALLOPROTEASE YME1L1"/>
    <property type="match status" value="1"/>
</dbReference>
<dbReference type="PANTHER" id="PTHR23076">
    <property type="entry name" value="METALLOPROTEASE M41 FTSH"/>
    <property type="match status" value="1"/>
</dbReference>
<dbReference type="Pfam" id="PF00004">
    <property type="entry name" value="AAA"/>
    <property type="match status" value="1"/>
</dbReference>
<dbReference type="Pfam" id="PF17862">
    <property type="entry name" value="AAA_lid_3"/>
    <property type="match status" value="1"/>
</dbReference>
<dbReference type="Pfam" id="PF06480">
    <property type="entry name" value="FtsH_ext"/>
    <property type="match status" value="1"/>
</dbReference>
<dbReference type="Pfam" id="PF01434">
    <property type="entry name" value="Peptidase_M41"/>
    <property type="match status" value="1"/>
</dbReference>
<dbReference type="SMART" id="SM00382">
    <property type="entry name" value="AAA"/>
    <property type="match status" value="1"/>
</dbReference>
<dbReference type="SUPFAM" id="SSF140990">
    <property type="entry name" value="FtsH protease domain-like"/>
    <property type="match status" value="1"/>
</dbReference>
<dbReference type="SUPFAM" id="SSF52540">
    <property type="entry name" value="P-loop containing nucleoside triphosphate hydrolases"/>
    <property type="match status" value="1"/>
</dbReference>
<dbReference type="PROSITE" id="PS00674">
    <property type="entry name" value="AAA"/>
    <property type="match status" value="1"/>
</dbReference>
<reference key="1">
    <citation type="journal article" date="1998" name="Nature">
        <title>Deciphering the biology of Mycobacterium tuberculosis from the complete genome sequence.</title>
        <authorList>
            <person name="Cole S.T."/>
            <person name="Brosch R."/>
            <person name="Parkhill J."/>
            <person name="Garnier T."/>
            <person name="Churcher C.M."/>
            <person name="Harris D.E."/>
            <person name="Gordon S.V."/>
            <person name="Eiglmeier K."/>
            <person name="Gas S."/>
            <person name="Barry C.E. III"/>
            <person name="Tekaia F."/>
            <person name="Badcock K."/>
            <person name="Basham D."/>
            <person name="Brown D."/>
            <person name="Chillingworth T."/>
            <person name="Connor R."/>
            <person name="Davies R.M."/>
            <person name="Devlin K."/>
            <person name="Feltwell T."/>
            <person name="Gentles S."/>
            <person name="Hamlin N."/>
            <person name="Holroyd S."/>
            <person name="Hornsby T."/>
            <person name="Jagels K."/>
            <person name="Krogh A."/>
            <person name="McLean J."/>
            <person name="Moule S."/>
            <person name="Murphy L.D."/>
            <person name="Oliver S."/>
            <person name="Osborne J."/>
            <person name="Quail M.A."/>
            <person name="Rajandream M.A."/>
            <person name="Rogers J."/>
            <person name="Rutter S."/>
            <person name="Seeger K."/>
            <person name="Skelton S."/>
            <person name="Squares S."/>
            <person name="Squares R."/>
            <person name="Sulston J.E."/>
            <person name="Taylor K."/>
            <person name="Whitehead S."/>
            <person name="Barrell B.G."/>
        </authorList>
    </citation>
    <scope>NUCLEOTIDE SEQUENCE [LARGE SCALE GENOMIC DNA]</scope>
    <source>
        <strain>ATCC 25618 / H37Rv</strain>
    </source>
</reference>
<reference key="2">
    <citation type="journal article" date="1998" name="Gene">
        <title>Cloning and expression of the gene coding for FtsH protease from Mycobacterium tuberculosis H37Rv.</title>
        <authorList>
            <person name="Anilkumar G."/>
            <person name="Chauhan M.M."/>
            <person name="Ajitkumar P."/>
        </authorList>
    </citation>
    <scope>SUBCELLULAR LOCATION</scope>
    <source>
        <strain>ATCC 25618 / H37Rv</strain>
    </source>
</reference>
<reference key="3">
    <citation type="journal article" date="2006" name="FEMS Microbiol. Lett.">
        <title>Functional characterization of AAA family FtsH protease of Mycobacterium tuberculosis.</title>
        <authorList>
            <person name="Srinivasan R."/>
            <person name="Anilkumar G."/>
            <person name="Rajeswari H."/>
            <person name="Ajitkumar P."/>
        </authorList>
    </citation>
    <scope>CHARACTERIZATION</scope>
    <scope>SUBSTRATES</scope>
    <source>
        <strain>ATCC 25618 / H37Rv</strain>
    </source>
</reference>
<reference key="4">
    <citation type="journal article" date="2011" name="Mol. Cell. Proteomics">
        <title>Proteogenomic analysis of Mycobacterium tuberculosis by high resolution mass spectrometry.</title>
        <authorList>
            <person name="Kelkar D.S."/>
            <person name="Kumar D."/>
            <person name="Kumar P."/>
            <person name="Balakrishnan L."/>
            <person name="Muthusamy B."/>
            <person name="Yadav A.K."/>
            <person name="Shrivastava P."/>
            <person name="Marimuthu A."/>
            <person name="Anand S."/>
            <person name="Sundaram H."/>
            <person name="Kingsbury R."/>
            <person name="Harsha H.C."/>
            <person name="Nair B."/>
            <person name="Prasad T.S."/>
            <person name="Chauhan D.S."/>
            <person name="Katoch K."/>
            <person name="Katoch V.M."/>
            <person name="Kumar P."/>
            <person name="Chaerkady R."/>
            <person name="Ramachandran S."/>
            <person name="Dash D."/>
            <person name="Pandey A."/>
        </authorList>
    </citation>
    <scope>IDENTIFICATION BY MASS SPECTROMETRY [LARGE SCALE ANALYSIS]</scope>
    <source>
        <strain>ATCC 25618 / H37Rv</strain>
    </source>
</reference>
<organism>
    <name type="scientific">Mycobacterium tuberculosis (strain ATCC 25618 / H37Rv)</name>
    <dbReference type="NCBI Taxonomy" id="83332"/>
    <lineage>
        <taxon>Bacteria</taxon>
        <taxon>Bacillati</taxon>
        <taxon>Actinomycetota</taxon>
        <taxon>Actinomycetes</taxon>
        <taxon>Mycobacteriales</taxon>
        <taxon>Mycobacteriaceae</taxon>
        <taxon>Mycobacterium</taxon>
        <taxon>Mycobacterium tuberculosis complex</taxon>
    </lineage>
</organism>
<keyword id="KW-0067">ATP-binding</keyword>
<keyword id="KW-1003">Cell membrane</keyword>
<keyword id="KW-0378">Hydrolase</keyword>
<keyword id="KW-0472">Membrane</keyword>
<keyword id="KW-0479">Metal-binding</keyword>
<keyword id="KW-0482">Metalloprotease</keyword>
<keyword id="KW-0547">Nucleotide-binding</keyword>
<keyword id="KW-0645">Protease</keyword>
<keyword id="KW-1185">Reference proteome</keyword>
<keyword id="KW-0812">Transmembrane</keyword>
<keyword id="KW-1133">Transmembrane helix</keyword>
<keyword id="KW-0862">Zinc</keyword>
<feature type="chain" id="PRO_0000084644" description="ATP-dependent zinc metalloprotease FtsH">
    <location>
        <begin position="1"/>
        <end position="760"/>
    </location>
</feature>
<feature type="topological domain" description="Cytoplasmic" evidence="1">
    <location>
        <begin position="1"/>
        <end position="5"/>
    </location>
</feature>
<feature type="transmembrane region" description="Helical" evidence="1">
    <location>
        <begin position="6"/>
        <end position="26"/>
    </location>
</feature>
<feature type="topological domain" description="Extracellular" evidence="1">
    <location>
        <begin position="27"/>
        <end position="110"/>
    </location>
</feature>
<feature type="transmembrane region" description="Helical" evidence="1">
    <location>
        <begin position="111"/>
        <end position="131"/>
    </location>
</feature>
<feature type="topological domain" description="Cytoplasmic" evidence="1">
    <location>
        <begin position="132"/>
        <end position="760"/>
    </location>
</feature>
<feature type="region of interest" description="Disordered" evidence="2">
    <location>
        <begin position="616"/>
        <end position="760"/>
    </location>
</feature>
<feature type="compositionally biased region" description="Low complexity" evidence="2">
    <location>
        <begin position="650"/>
        <end position="669"/>
    </location>
</feature>
<feature type="compositionally biased region" description="Acidic residues" evidence="2">
    <location>
        <begin position="740"/>
        <end position="750"/>
    </location>
</feature>
<feature type="active site" evidence="1">
    <location>
        <position position="426"/>
    </location>
</feature>
<feature type="binding site" evidence="1">
    <location>
        <begin position="203"/>
        <end position="210"/>
    </location>
    <ligand>
        <name>ATP</name>
        <dbReference type="ChEBI" id="CHEBI:30616"/>
    </ligand>
</feature>
<feature type="binding site" evidence="1">
    <location>
        <position position="425"/>
    </location>
    <ligand>
        <name>Zn(2+)</name>
        <dbReference type="ChEBI" id="CHEBI:29105"/>
        <note>catalytic</note>
    </ligand>
</feature>
<feature type="binding site" evidence="1">
    <location>
        <position position="429"/>
    </location>
    <ligand>
        <name>Zn(2+)</name>
        <dbReference type="ChEBI" id="CHEBI:29105"/>
        <note>catalytic</note>
    </ligand>
</feature>
<feature type="binding site" evidence="1">
    <location>
        <position position="501"/>
    </location>
    <ligand>
        <name>Zn(2+)</name>
        <dbReference type="ChEBI" id="CHEBI:29105"/>
        <note>catalytic</note>
    </ligand>
</feature>
<gene>
    <name evidence="1" type="primary">ftsH</name>
    <name type="ordered locus">Rv3610c</name>
    <name type="ORF">MTCY07H7B.12</name>
</gene>
<comment type="function">
    <text evidence="1">Acts as a processive, ATP-dependent zinc metallopeptidase for both cytoplasmic and membrane proteins. Plays a role in the quality control of integral membrane proteins.</text>
</comment>
<comment type="function">
    <text>Complements an E.coli null mutation. Upon overexpression in E.coli has been shown to degrade endogenous sigma-32, SecY and phage lambda cII protein.</text>
</comment>
<comment type="cofactor">
    <cofactor evidence="1">
        <name>Zn(2+)</name>
        <dbReference type="ChEBI" id="CHEBI:29105"/>
    </cofactor>
    <text evidence="1">Binds 1 zinc ion per subunit.</text>
</comment>
<comment type="subunit">
    <text evidence="1">Homohexamer.</text>
</comment>
<comment type="subcellular location">
    <subcellularLocation>
        <location evidence="3">Cell membrane</location>
        <topology evidence="3">Multi-pass membrane protein</topology>
        <orientation evidence="3">Cytoplasmic side</orientation>
    </subcellularLocation>
    <text>Upon expression in E.coli.</text>
</comment>
<comment type="similarity">
    <text evidence="1">In the central section; belongs to the AAA ATPase family.</text>
</comment>
<comment type="similarity">
    <text evidence="1">In the C-terminal section; belongs to the peptidase M41 family.</text>
</comment>